<organismHost>
    <name type="scientific">Mycobacterium</name>
    <dbReference type="NCBI Taxonomy" id="1763"/>
</organismHost>
<dbReference type="EMBL" id="AF022214">
    <property type="protein sequence ID" value="AAC18511.1"/>
    <property type="molecule type" value="Genomic_DNA"/>
</dbReference>
<dbReference type="PIR" id="E72808">
    <property type="entry name" value="E72808"/>
</dbReference>
<dbReference type="RefSeq" id="NP_046887.1">
    <property type="nucleotide sequence ID" value="NC_001900.1"/>
</dbReference>
<dbReference type="GeneID" id="1261600"/>
<dbReference type="KEGG" id="vg:1261600"/>
<dbReference type="OrthoDB" id="4950at10239"/>
<dbReference type="Proteomes" id="UP000002131">
    <property type="component" value="Segment"/>
</dbReference>
<dbReference type="Gene3D" id="3.90.320.10">
    <property type="match status" value="1"/>
</dbReference>
<dbReference type="InterPro" id="IPR011604">
    <property type="entry name" value="PDDEXK-like_dom_sf"/>
</dbReference>
<dbReference type="InterPro" id="IPR038726">
    <property type="entry name" value="PDDEXK_AddAB-type"/>
</dbReference>
<dbReference type="InterPro" id="IPR011335">
    <property type="entry name" value="Restrct_endonuc-II-like"/>
</dbReference>
<dbReference type="Pfam" id="PF12705">
    <property type="entry name" value="PDDEXK_1"/>
    <property type="match status" value="1"/>
</dbReference>
<dbReference type="SUPFAM" id="SSF52980">
    <property type="entry name" value="Restriction endonuclease-like"/>
    <property type="match status" value="1"/>
</dbReference>
<sequence>MTQIKLPLRSVSQINQYTKCPMAYKLARIDKVWQRPAAWLPQGTAFHAVAEAVEVWESYGMPLTLDEAKDMFRWHYANDVGAFTEETPNFEWWTWSGPYNGQRDIERRYTVGLEQVEKFFAWRGTPGQEIWVTPDGTPAIELYFEIELDGILVRGYIDAVVVVDGELRVRDYKTGNQPGDDFQLGVYALAVAMTYGVEAPKTGDYFMVGKKGKAPKPTKPYDLTKWTREAITEEFHRVEEGIAASMFDPLPEPDKCKFCDVSYSCPVFK</sequence>
<proteinExistence type="predicted"/>
<organism>
    <name type="scientific">Mycobacterium phage D29</name>
    <name type="common">Mycobacteriophage D29</name>
    <dbReference type="NCBI Taxonomy" id="28369"/>
    <lineage>
        <taxon>Viruses</taxon>
        <taxon>Duplodnaviria</taxon>
        <taxon>Heunggongvirae</taxon>
        <taxon>Uroviricota</taxon>
        <taxon>Caudoviricetes</taxon>
        <taxon>Fromanvirus</taxon>
    </lineage>
</organism>
<reference key="1">
    <citation type="journal article" date="1998" name="J. Mol. Biol.">
        <title>Genome structure of mycobacteriophage D29: implications for phage evolution.</title>
        <authorList>
            <person name="Ford M.E."/>
            <person name="Sarkis G.J."/>
            <person name="Belanger A.E."/>
            <person name="Hendrix R.W."/>
            <person name="Hatfull G.F."/>
        </authorList>
    </citation>
    <scope>NUCLEOTIDE SEQUENCE [LARGE SCALE GENOMIC DNA]</scope>
</reference>
<protein>
    <recommendedName>
        <fullName>Gene 69 protein</fullName>
    </recommendedName>
    <alternativeName>
        <fullName>Gp69</fullName>
    </alternativeName>
</protein>
<gene>
    <name type="primary">69</name>
</gene>
<keyword id="KW-1185">Reference proteome</keyword>
<name>VG69_BPMD2</name>
<accession>O64262</accession>
<feature type="chain" id="PRO_0000164810" description="Gene 69 protein">
    <location>
        <begin position="1"/>
        <end position="269"/>
    </location>
</feature>